<organism>
    <name type="scientific">Klebsiella pneumoniae (strain 342)</name>
    <dbReference type="NCBI Taxonomy" id="507522"/>
    <lineage>
        <taxon>Bacteria</taxon>
        <taxon>Pseudomonadati</taxon>
        <taxon>Pseudomonadota</taxon>
        <taxon>Gammaproteobacteria</taxon>
        <taxon>Enterobacterales</taxon>
        <taxon>Enterobacteriaceae</taxon>
        <taxon>Klebsiella/Raoultella group</taxon>
        <taxon>Klebsiella</taxon>
        <taxon>Klebsiella pneumoniae complex</taxon>
    </lineage>
</organism>
<accession>B5XMY6</accession>
<dbReference type="EC" id="6.1.1.14" evidence="1"/>
<dbReference type="EMBL" id="CP000964">
    <property type="protein sequence ID" value="ACI10469.1"/>
    <property type="molecule type" value="Genomic_DNA"/>
</dbReference>
<dbReference type="SMR" id="B5XMY6"/>
<dbReference type="KEGG" id="kpe:KPK_0182"/>
<dbReference type="HOGENOM" id="CLU_057066_1_0_6"/>
<dbReference type="Proteomes" id="UP000001734">
    <property type="component" value="Chromosome"/>
</dbReference>
<dbReference type="GO" id="GO:0005829">
    <property type="term" value="C:cytosol"/>
    <property type="evidence" value="ECO:0007669"/>
    <property type="project" value="TreeGrafter"/>
</dbReference>
<dbReference type="GO" id="GO:0005524">
    <property type="term" value="F:ATP binding"/>
    <property type="evidence" value="ECO:0007669"/>
    <property type="project" value="UniProtKB-UniRule"/>
</dbReference>
<dbReference type="GO" id="GO:0004820">
    <property type="term" value="F:glycine-tRNA ligase activity"/>
    <property type="evidence" value="ECO:0007669"/>
    <property type="project" value="UniProtKB-UniRule"/>
</dbReference>
<dbReference type="GO" id="GO:0006426">
    <property type="term" value="P:glycyl-tRNA aminoacylation"/>
    <property type="evidence" value="ECO:0007669"/>
    <property type="project" value="UniProtKB-UniRule"/>
</dbReference>
<dbReference type="CDD" id="cd00733">
    <property type="entry name" value="GlyRS_alpha_core"/>
    <property type="match status" value="1"/>
</dbReference>
<dbReference type="FunFam" id="1.20.58.180:FF:000001">
    <property type="entry name" value="Glycine--tRNA ligase alpha subunit"/>
    <property type="match status" value="1"/>
</dbReference>
<dbReference type="FunFam" id="3.30.930.10:FF:000006">
    <property type="entry name" value="Glycine--tRNA ligase alpha subunit"/>
    <property type="match status" value="1"/>
</dbReference>
<dbReference type="Gene3D" id="3.30.930.10">
    <property type="entry name" value="Bira Bifunctional Protein, Domain 2"/>
    <property type="match status" value="1"/>
</dbReference>
<dbReference type="Gene3D" id="1.20.58.180">
    <property type="entry name" value="Class II aaRS and biotin synthetases, domain 2"/>
    <property type="match status" value="1"/>
</dbReference>
<dbReference type="HAMAP" id="MF_00254">
    <property type="entry name" value="Gly_tRNA_synth_alpha"/>
    <property type="match status" value="1"/>
</dbReference>
<dbReference type="InterPro" id="IPR045864">
    <property type="entry name" value="aa-tRNA-synth_II/BPL/LPL"/>
</dbReference>
<dbReference type="InterPro" id="IPR006194">
    <property type="entry name" value="Gly-tRNA-synth_heterodimer"/>
</dbReference>
<dbReference type="InterPro" id="IPR002310">
    <property type="entry name" value="Gly-tRNA_ligase_asu"/>
</dbReference>
<dbReference type="NCBIfam" id="TIGR00388">
    <property type="entry name" value="glyQ"/>
    <property type="match status" value="1"/>
</dbReference>
<dbReference type="NCBIfam" id="NF006827">
    <property type="entry name" value="PRK09348.1"/>
    <property type="match status" value="1"/>
</dbReference>
<dbReference type="PANTHER" id="PTHR30075:SF2">
    <property type="entry name" value="GLYCINE--TRNA LIGASE, CHLOROPLASTIC_MITOCHONDRIAL 2"/>
    <property type="match status" value="1"/>
</dbReference>
<dbReference type="PANTHER" id="PTHR30075">
    <property type="entry name" value="GLYCYL-TRNA SYNTHETASE"/>
    <property type="match status" value="1"/>
</dbReference>
<dbReference type="Pfam" id="PF02091">
    <property type="entry name" value="tRNA-synt_2e"/>
    <property type="match status" value="1"/>
</dbReference>
<dbReference type="PRINTS" id="PR01044">
    <property type="entry name" value="TRNASYNTHGA"/>
</dbReference>
<dbReference type="SUPFAM" id="SSF55681">
    <property type="entry name" value="Class II aaRS and biotin synthetases"/>
    <property type="match status" value="1"/>
</dbReference>
<dbReference type="PROSITE" id="PS50861">
    <property type="entry name" value="AA_TRNA_LIGASE_II_GLYAB"/>
    <property type="match status" value="1"/>
</dbReference>
<gene>
    <name evidence="1" type="primary">glyQ</name>
    <name type="ordered locus">KPK_0182</name>
</gene>
<keyword id="KW-0030">Aminoacyl-tRNA synthetase</keyword>
<keyword id="KW-0067">ATP-binding</keyword>
<keyword id="KW-0963">Cytoplasm</keyword>
<keyword id="KW-0436">Ligase</keyword>
<keyword id="KW-0547">Nucleotide-binding</keyword>
<keyword id="KW-0648">Protein biosynthesis</keyword>
<evidence type="ECO:0000255" key="1">
    <source>
        <dbReference type="HAMAP-Rule" id="MF_00254"/>
    </source>
</evidence>
<proteinExistence type="inferred from homology"/>
<reference key="1">
    <citation type="journal article" date="2008" name="PLoS Genet.">
        <title>Complete genome sequence of the N2-fixing broad host range endophyte Klebsiella pneumoniae 342 and virulence predictions verified in mice.</title>
        <authorList>
            <person name="Fouts D.E."/>
            <person name="Tyler H.L."/>
            <person name="DeBoy R.T."/>
            <person name="Daugherty S."/>
            <person name="Ren Q."/>
            <person name="Badger J.H."/>
            <person name="Durkin A.S."/>
            <person name="Huot H."/>
            <person name="Shrivastava S."/>
            <person name="Kothari S."/>
            <person name="Dodson R.J."/>
            <person name="Mohamoud Y."/>
            <person name="Khouri H."/>
            <person name="Roesch L.F.W."/>
            <person name="Krogfelt K.A."/>
            <person name="Struve C."/>
            <person name="Triplett E.W."/>
            <person name="Methe B.A."/>
        </authorList>
    </citation>
    <scope>NUCLEOTIDE SEQUENCE [LARGE SCALE GENOMIC DNA]</scope>
    <source>
        <strain>342</strain>
    </source>
</reference>
<comment type="catalytic activity">
    <reaction evidence="1">
        <text>tRNA(Gly) + glycine + ATP = glycyl-tRNA(Gly) + AMP + diphosphate</text>
        <dbReference type="Rhea" id="RHEA:16013"/>
        <dbReference type="Rhea" id="RHEA-COMP:9664"/>
        <dbReference type="Rhea" id="RHEA-COMP:9683"/>
        <dbReference type="ChEBI" id="CHEBI:30616"/>
        <dbReference type="ChEBI" id="CHEBI:33019"/>
        <dbReference type="ChEBI" id="CHEBI:57305"/>
        <dbReference type="ChEBI" id="CHEBI:78442"/>
        <dbReference type="ChEBI" id="CHEBI:78522"/>
        <dbReference type="ChEBI" id="CHEBI:456215"/>
        <dbReference type="EC" id="6.1.1.14"/>
    </reaction>
</comment>
<comment type="subunit">
    <text evidence="1">Tetramer of two alpha and two beta subunits.</text>
</comment>
<comment type="subcellular location">
    <subcellularLocation>
        <location evidence="1">Cytoplasm</location>
    </subcellularLocation>
</comment>
<comment type="similarity">
    <text evidence="1">Belongs to the class-II aminoacyl-tRNA synthetase family.</text>
</comment>
<name>SYGA_KLEP3</name>
<protein>
    <recommendedName>
        <fullName evidence="1">Glycine--tRNA ligase alpha subunit</fullName>
        <ecNumber evidence="1">6.1.1.14</ecNumber>
    </recommendedName>
    <alternativeName>
        <fullName evidence="1">Glycyl-tRNA synthetase alpha subunit</fullName>
        <shortName evidence="1">GlyRS</shortName>
    </alternativeName>
</protein>
<feature type="chain" id="PRO_1000101203" description="Glycine--tRNA ligase alpha subunit">
    <location>
        <begin position="1"/>
        <end position="303"/>
    </location>
</feature>
<sequence>MQKFDTRTFQGLILTLQDYWARQGCTIVQPLDMEVGAGTSHPMTCLRALGPEPMATAYVQPSRRPTDGRYGENPNRLQHYYQFQVVIKPSPDNIQELYLGSLKELGMDPTIHDIRFVEDNWENPTLGAWGLGWEVWLNGMEVTQFTYFQQVGGLECKPVTGEITYGLERLAMYIQGVDSVYDLVWSDGPLGKTTYGDVFHQNEVEQSTYNFEYADVDFLFSCFEQYEKEAQQLLALETPLPLPAYERILKAAHSFNLLDARKAISVTERQRYILRIRTLTKAVAEAYYASREALGFPMCNKNK</sequence>